<feature type="chain" id="PRO_0000373666" description="ERCC4 domain-containing protein EP364R">
    <location>
        <begin position="1"/>
        <end position="364"/>
    </location>
</feature>
<feature type="domain" description="ERCC4">
    <location>
        <begin position="3"/>
        <end position="102"/>
    </location>
</feature>
<feature type="region of interest" description="Disordered" evidence="1">
    <location>
        <begin position="319"/>
        <end position="352"/>
    </location>
</feature>
<feature type="compositionally biased region" description="Polar residues" evidence="1">
    <location>
        <begin position="319"/>
        <end position="328"/>
    </location>
</feature>
<feature type="compositionally biased region" description="Low complexity" evidence="1">
    <location>
        <begin position="338"/>
        <end position="348"/>
    </location>
</feature>
<feature type="mutagenesis site" description="Complete loss of ability to inhibit host IFN signaling; when associated with A-79." evidence="3">
    <original>Y</original>
    <variation>S</variation>
    <location>
        <position position="77"/>
    </location>
</feature>
<feature type="mutagenesis site" description="Complete loss of ability to inhibit host IFN signaling; when associated with S-77." evidence="3">
    <original>N</original>
    <variation>A</variation>
    <location>
        <position position="79"/>
    </location>
</feature>
<reference key="1">
    <citation type="journal article" date="1995" name="Virology">
        <title>Analysis of the complete nucleotide sequence of African swine fever virus.</title>
        <authorList>
            <person name="Yanez R.J."/>
            <person name="Rodriguez J.M."/>
            <person name="Nogal M.L."/>
            <person name="Yuste L."/>
            <person name="Enriquez C."/>
            <person name="Rodriguez J.F."/>
            <person name="Vinuela E."/>
        </authorList>
    </citation>
    <scope>NUCLEOTIDE SEQUENCE [LARGE SCALE GENOMIC DNA]</scope>
</reference>
<reference key="2">
    <citation type="journal article" date="2020" name="J. Virol.">
        <title>The African Swine Fever Virus Transcriptome.</title>
        <authorList>
            <person name="Cackett G."/>
            <person name="Matelska D."/>
            <person name="Sykora M."/>
            <person name="Portugal R."/>
            <person name="Malecki M."/>
            <person name="Baehler J."/>
            <person name="Dixon L."/>
            <person name="Werner F."/>
        </authorList>
    </citation>
    <scope>INDUCTION</scope>
</reference>
<reference key="3">
    <citation type="journal article" date="2022" name="J. Virol.">
        <title>African Swine Fever Virus EP364R and C129R Target Cyclic GMP-AMP To Inhibit the cGAS-STING Signaling Pathway.</title>
        <authorList>
            <person name="Dodantenna N."/>
            <person name="Ranathunga L."/>
            <person name="Chathuranga W.A.G."/>
            <person name="Weerawardhana A."/>
            <person name="Cha J.W."/>
            <person name="Subasinghe A."/>
            <person name="Gamage N."/>
            <person name="Haluwana D.K."/>
            <person name="Kim Y."/>
            <person name="Jheong W."/>
            <person name="Poo H."/>
            <person name="Lee J.S."/>
        </authorList>
    </citation>
    <scope>FUNCTION</scope>
    <scope>CATALYTIC ACTIVITY</scope>
    <scope>MUTAGENESIS OF TYR-77 AND ASN-79</scope>
</reference>
<organism>
    <name type="scientific">African swine fever virus (strain Badajoz 1971 Vero-adapted)</name>
    <name type="common">Ba71V</name>
    <name type="synonym">ASFV</name>
    <dbReference type="NCBI Taxonomy" id="10498"/>
    <lineage>
        <taxon>Viruses</taxon>
        <taxon>Varidnaviria</taxon>
        <taxon>Bamfordvirae</taxon>
        <taxon>Nucleocytoviricota</taxon>
        <taxon>Pokkesviricetes</taxon>
        <taxon>Asfuvirales</taxon>
        <taxon>Asfarviridae</taxon>
        <taxon>Asfivirus</taxon>
        <taxon>African swine fever virus</taxon>
    </lineage>
</organism>
<keyword id="KW-0945">Host-virus interaction</keyword>
<keyword id="KW-0378">Hydrolase</keyword>
<keyword id="KW-1090">Inhibition of host innate immune response by virus</keyword>
<keyword id="KW-1114">Inhibition of host interferon signaling pathway by virus</keyword>
<keyword id="KW-0922">Interferon antiviral system evasion</keyword>
<keyword id="KW-0426">Late protein</keyword>
<keyword id="KW-1185">Reference proteome</keyword>
<keyword id="KW-0899">Viral immunoevasion</keyword>
<proteinExistence type="evidence at protein level"/>
<accession>Q65151</accession>
<comment type="function">
    <text evidence="3">Plays a role in the inhibition of type I interferon signaling pathway. Mechanistically, specifically interacts with 2',3'-cGAMP and cleaves it via its phosphodiesterase activity. In turn, prevents 2',3'-cGAMP interaction with host ER-resident STING1 leading to inhibition of downstream signaling pathway and type I interferon production.</text>
</comment>
<comment type="induction">
    <text evidence="2">Expressed in the late phase of the viral replicative cycle.</text>
</comment>
<comment type="similarity">
    <text evidence="4">Belongs to the asfivirus EP364R family.</text>
</comment>
<protein>
    <recommendedName>
        <fullName>ERCC4 domain-containing protein EP364R</fullName>
        <shortName>pEP364R</shortName>
        <ecNumber evidence="3">3.1.4.-</ecNumber>
    </recommendedName>
</protein>
<evidence type="ECO:0000256" key="1">
    <source>
        <dbReference type="SAM" id="MobiDB-lite"/>
    </source>
</evidence>
<evidence type="ECO:0000269" key="2">
    <source>
    </source>
</evidence>
<evidence type="ECO:0000269" key="3">
    <source>
    </source>
</evidence>
<evidence type="ECO:0000305" key="4"/>
<gene>
    <name type="ordered locus">Ba71V-059</name>
    <name type="ORF">EP364R</name>
</gene>
<organismHost>
    <name type="scientific">Ornithodoros</name>
    <name type="common">relapsing fever ticks</name>
    <dbReference type="NCBI Taxonomy" id="6937"/>
</organismHost>
<organismHost>
    <name type="scientific">Sus scrofa</name>
    <name type="common">Pig</name>
    <dbReference type="NCBI Taxonomy" id="9823"/>
</organismHost>
<name>VF364_ASFB7</name>
<dbReference type="EC" id="3.1.4.-" evidence="3"/>
<dbReference type="EMBL" id="U18466">
    <property type="protein sequence ID" value="AAA65289.1"/>
    <property type="molecule type" value="Genomic_DNA"/>
</dbReference>
<dbReference type="RefSeq" id="NP_042753.1">
    <property type="nucleotide sequence ID" value="NC_001659.2"/>
</dbReference>
<dbReference type="GeneID" id="22220289"/>
<dbReference type="KEGG" id="vg:22220289"/>
<dbReference type="Proteomes" id="UP000000624">
    <property type="component" value="Segment"/>
</dbReference>
<dbReference type="GO" id="GO:0048476">
    <property type="term" value="C:Holliday junction resolvase complex"/>
    <property type="evidence" value="ECO:0007669"/>
    <property type="project" value="TreeGrafter"/>
</dbReference>
<dbReference type="GO" id="GO:0048257">
    <property type="term" value="F:3'-flap endonuclease activity"/>
    <property type="evidence" value="ECO:0007669"/>
    <property type="project" value="TreeGrafter"/>
</dbReference>
<dbReference type="GO" id="GO:0008821">
    <property type="term" value="F:crossover junction DNA endonuclease activity"/>
    <property type="evidence" value="ECO:0007669"/>
    <property type="project" value="InterPro"/>
</dbReference>
<dbReference type="GO" id="GO:0003677">
    <property type="term" value="F:DNA binding"/>
    <property type="evidence" value="ECO:0007669"/>
    <property type="project" value="InterPro"/>
</dbReference>
<dbReference type="GO" id="GO:0006308">
    <property type="term" value="P:DNA catabolic process"/>
    <property type="evidence" value="ECO:0007669"/>
    <property type="project" value="InterPro"/>
</dbReference>
<dbReference type="GO" id="GO:0000727">
    <property type="term" value="P:double-strand break repair via break-induced replication"/>
    <property type="evidence" value="ECO:0007669"/>
    <property type="project" value="TreeGrafter"/>
</dbReference>
<dbReference type="GO" id="GO:0052170">
    <property type="term" value="P:symbiont-mediated suppression of host innate immune response"/>
    <property type="evidence" value="ECO:0007669"/>
    <property type="project" value="UniProtKB-KW"/>
</dbReference>
<dbReference type="GO" id="GO:0039502">
    <property type="term" value="P:symbiont-mediated suppression of host type I interferon-mediated signaling pathway"/>
    <property type="evidence" value="ECO:0007669"/>
    <property type="project" value="UniProtKB-KW"/>
</dbReference>
<dbReference type="Gene3D" id="3.40.50.10130">
    <property type="match status" value="1"/>
</dbReference>
<dbReference type="InterPro" id="IPR006166">
    <property type="entry name" value="ERCC4_domain"/>
</dbReference>
<dbReference type="InterPro" id="IPR033309">
    <property type="entry name" value="Mus81"/>
</dbReference>
<dbReference type="InterPro" id="IPR011335">
    <property type="entry name" value="Restrct_endonuc-II-like"/>
</dbReference>
<dbReference type="PANTHER" id="PTHR13451">
    <property type="entry name" value="CLASS II CROSSOVER JUNCTION ENDONUCLEASE MUS81"/>
    <property type="match status" value="1"/>
</dbReference>
<dbReference type="PANTHER" id="PTHR13451:SF0">
    <property type="entry name" value="CROSSOVER JUNCTION ENDONUCLEASE MUS81"/>
    <property type="match status" value="1"/>
</dbReference>
<dbReference type="Pfam" id="PF02732">
    <property type="entry name" value="ERCC4"/>
    <property type="match status" value="1"/>
</dbReference>
<dbReference type="SUPFAM" id="SSF52980">
    <property type="entry name" value="Restriction endonuclease-like"/>
    <property type="match status" value="1"/>
</dbReference>
<sequence length="364" mass="40850">MYFLVADHREHHVIPFLKTDFHDMQHNPMFTQKQALLEIKQLFTGDYLICKSPTTILACIERKTYKDFAASLKDGRYKNRQKMLSLREQTNCQLYFFVEGPAFPNPQKKINHVAYASIITAMTHLMVRDHIFVIQTKNEAHSSQKLVQLFYAFSKEMVCVVPTSLTPTDEELCIKLWSSLSGISGVIGKILANTCSVAHLVSGKLSSQNIDQLKTPSNRPFPKKVKRMLISISKGNKELEIKLLSGVPNIGKKLAAEILKDHALLFFLNQPVECLANIQIVQKTRTIKLGMKRAEAIHYFLNWCGSAHVTDDSQNITEASRPATQPAATQPLHEVSDDATSNASDTSSPIGHQTLSKEMLLNTA</sequence>